<dbReference type="EC" id="2.7.1.11" evidence="6"/>
<dbReference type="EMBL" id="U25183">
    <property type="protein sequence ID" value="AAC48615.1"/>
    <property type="molecule type" value="mRNA"/>
</dbReference>
<dbReference type="RefSeq" id="NP_001003199.1">
    <property type="nucleotide sequence ID" value="NM_001003199.1"/>
</dbReference>
<dbReference type="RefSeq" id="XP_038294274.1">
    <property type="nucleotide sequence ID" value="XM_038438346.1"/>
</dbReference>
<dbReference type="RefSeq" id="XP_038294275.1">
    <property type="nucleotide sequence ID" value="XM_038438347.1"/>
</dbReference>
<dbReference type="RefSeq" id="XP_038294276.1">
    <property type="nucleotide sequence ID" value="XM_038438348.1"/>
</dbReference>
<dbReference type="RefSeq" id="XP_038294277.1">
    <property type="nucleotide sequence ID" value="XM_038438349.1"/>
</dbReference>
<dbReference type="RefSeq" id="XP_038315972.1">
    <property type="nucleotide sequence ID" value="XM_038460044.1"/>
</dbReference>
<dbReference type="RefSeq" id="XP_038315973.1">
    <property type="nucleotide sequence ID" value="XM_038460045.1"/>
</dbReference>
<dbReference type="RefSeq" id="XP_038315974.1">
    <property type="nucleotide sequence ID" value="XM_038460046.1"/>
</dbReference>
<dbReference type="RefSeq" id="XP_038315975.1">
    <property type="nucleotide sequence ID" value="XM_038460047.1"/>
</dbReference>
<dbReference type="RefSeq" id="XP_038433398.1">
    <property type="nucleotide sequence ID" value="XM_038577470.1"/>
</dbReference>
<dbReference type="RefSeq" id="XP_038433399.1">
    <property type="nucleotide sequence ID" value="XM_038577471.1"/>
</dbReference>
<dbReference type="RefSeq" id="XP_038433400.1">
    <property type="nucleotide sequence ID" value="XM_038577472.1"/>
</dbReference>
<dbReference type="RefSeq" id="XP_038433401.1">
    <property type="nucleotide sequence ID" value="XM_038577473.1"/>
</dbReference>
<dbReference type="SMR" id="P52784"/>
<dbReference type="FunCoup" id="P52784">
    <property type="interactions" value="949"/>
</dbReference>
<dbReference type="STRING" id="9615.ENSCAFP00000013277"/>
<dbReference type="GlyCosmos" id="P52784">
    <property type="glycosylation" value="1 site, No reported glycans"/>
</dbReference>
<dbReference type="PaxDb" id="9612-ENSCAFP00000013277"/>
<dbReference type="GeneID" id="403849"/>
<dbReference type="eggNOG" id="KOG2440">
    <property type="taxonomic scope" value="Eukaryota"/>
</dbReference>
<dbReference type="HOGENOM" id="CLU_011053_0_0_1"/>
<dbReference type="InParanoid" id="P52784"/>
<dbReference type="OrthoDB" id="537915at2759"/>
<dbReference type="BRENDA" id="2.7.1.11">
    <property type="organism ID" value="1153"/>
</dbReference>
<dbReference type="UniPathway" id="UPA00109">
    <property type="reaction ID" value="UER00182"/>
</dbReference>
<dbReference type="Proteomes" id="UP000002254">
    <property type="component" value="Unplaced"/>
</dbReference>
<dbReference type="Proteomes" id="UP000694429">
    <property type="component" value="Unplaced"/>
</dbReference>
<dbReference type="Proteomes" id="UP000694542">
    <property type="component" value="Unplaced"/>
</dbReference>
<dbReference type="Proteomes" id="UP000805418">
    <property type="component" value="Unplaced"/>
</dbReference>
<dbReference type="GO" id="GO:0005945">
    <property type="term" value="C:6-phosphofructokinase complex"/>
    <property type="evidence" value="ECO:0000318"/>
    <property type="project" value="GO_Central"/>
</dbReference>
<dbReference type="GO" id="GO:0016020">
    <property type="term" value="C:membrane"/>
    <property type="evidence" value="ECO:0000318"/>
    <property type="project" value="GO_Central"/>
</dbReference>
<dbReference type="GO" id="GO:0003872">
    <property type="term" value="F:6-phosphofructokinase activity"/>
    <property type="evidence" value="ECO:0000250"/>
    <property type="project" value="UniProtKB"/>
</dbReference>
<dbReference type="GO" id="GO:0005524">
    <property type="term" value="F:ATP binding"/>
    <property type="evidence" value="ECO:0007669"/>
    <property type="project" value="UniProtKB-KW"/>
</dbReference>
<dbReference type="GO" id="GO:0070095">
    <property type="term" value="F:fructose-6-phosphate binding"/>
    <property type="evidence" value="ECO:0000318"/>
    <property type="project" value="GO_Central"/>
</dbReference>
<dbReference type="GO" id="GO:0046872">
    <property type="term" value="F:metal ion binding"/>
    <property type="evidence" value="ECO:0007669"/>
    <property type="project" value="UniProtKB-KW"/>
</dbReference>
<dbReference type="GO" id="GO:0061621">
    <property type="term" value="P:canonical glycolysis"/>
    <property type="evidence" value="ECO:0000318"/>
    <property type="project" value="GO_Central"/>
</dbReference>
<dbReference type="GO" id="GO:0030388">
    <property type="term" value="P:fructose 1,6-bisphosphate metabolic process"/>
    <property type="evidence" value="ECO:0000318"/>
    <property type="project" value="GO_Central"/>
</dbReference>
<dbReference type="GO" id="GO:0006002">
    <property type="term" value="P:fructose 6-phosphate metabolic process"/>
    <property type="evidence" value="ECO:0000318"/>
    <property type="project" value="GO_Central"/>
</dbReference>
<dbReference type="CDD" id="cd00764">
    <property type="entry name" value="Eukaryotic_PFK"/>
    <property type="match status" value="1"/>
</dbReference>
<dbReference type="FunFam" id="3.40.50.450:FF:000004">
    <property type="entry name" value="ATP-dependent 6-phosphofructokinase"/>
    <property type="match status" value="1"/>
</dbReference>
<dbReference type="FunFam" id="3.40.50.460:FF:000001">
    <property type="entry name" value="ATP-dependent 6-phosphofructokinase"/>
    <property type="match status" value="1"/>
</dbReference>
<dbReference type="FunFam" id="3.40.50.460:FF:000003">
    <property type="entry name" value="ATP-dependent 6-phosphofructokinase"/>
    <property type="match status" value="1"/>
</dbReference>
<dbReference type="FunFam" id="3.40.50.450:FF:000043">
    <property type="entry name" value="ATP-dependent 6-phosphofructokinase, platelet type"/>
    <property type="match status" value="1"/>
</dbReference>
<dbReference type="Gene3D" id="3.40.50.450">
    <property type="match status" value="2"/>
</dbReference>
<dbReference type="Gene3D" id="3.40.50.460">
    <property type="entry name" value="Phosphofructokinase domain"/>
    <property type="match status" value="2"/>
</dbReference>
<dbReference type="HAMAP" id="MF_03184">
    <property type="entry name" value="Phosphofructokinase_I_E"/>
    <property type="match status" value="1"/>
</dbReference>
<dbReference type="InterPro" id="IPR009161">
    <property type="entry name" value="6-Pfructokinase_euk"/>
</dbReference>
<dbReference type="InterPro" id="IPR022953">
    <property type="entry name" value="ATP_PFK"/>
</dbReference>
<dbReference type="InterPro" id="IPR041914">
    <property type="entry name" value="PFK_vert-type"/>
</dbReference>
<dbReference type="InterPro" id="IPR015912">
    <property type="entry name" value="Phosphofructokinase_CS"/>
</dbReference>
<dbReference type="InterPro" id="IPR000023">
    <property type="entry name" value="Phosphofructokinase_dom"/>
</dbReference>
<dbReference type="InterPro" id="IPR035966">
    <property type="entry name" value="PKF_sf"/>
</dbReference>
<dbReference type="NCBIfam" id="TIGR02478">
    <property type="entry name" value="6PF1K_euk"/>
    <property type="match status" value="1"/>
</dbReference>
<dbReference type="PANTHER" id="PTHR13697:SF59">
    <property type="entry name" value="ATP-DEPENDENT 6-PHOSPHOFRUCTOKINASE, MUSCLE TYPE"/>
    <property type="match status" value="1"/>
</dbReference>
<dbReference type="PANTHER" id="PTHR13697">
    <property type="entry name" value="PHOSPHOFRUCTOKINASE"/>
    <property type="match status" value="1"/>
</dbReference>
<dbReference type="Pfam" id="PF00365">
    <property type="entry name" value="PFK"/>
    <property type="match status" value="2"/>
</dbReference>
<dbReference type="PIRSF" id="PIRSF000533">
    <property type="entry name" value="ATP_PFK_euk"/>
    <property type="match status" value="1"/>
</dbReference>
<dbReference type="PRINTS" id="PR00476">
    <property type="entry name" value="PHFRCTKINASE"/>
</dbReference>
<dbReference type="SUPFAM" id="SSF53784">
    <property type="entry name" value="Phosphofructokinase"/>
    <property type="match status" value="2"/>
</dbReference>
<dbReference type="PROSITE" id="PS00433">
    <property type="entry name" value="PHOSPHOFRUCTOKINASE"/>
    <property type="match status" value="2"/>
</dbReference>
<keyword id="KW-0007">Acetylation</keyword>
<keyword id="KW-0021">Allosteric enzyme</keyword>
<keyword id="KW-0067">ATP-binding</keyword>
<keyword id="KW-0963">Cytoplasm</keyword>
<keyword id="KW-0324">Glycolysis</keyword>
<keyword id="KW-0325">Glycoprotein</keyword>
<keyword id="KW-0379">Hydroxylation</keyword>
<keyword id="KW-0418">Kinase</keyword>
<keyword id="KW-0460">Magnesium</keyword>
<keyword id="KW-0479">Metal-binding</keyword>
<keyword id="KW-0547">Nucleotide-binding</keyword>
<keyword id="KW-0597">Phosphoprotein</keyword>
<keyword id="KW-1185">Reference proteome</keyword>
<keyword id="KW-0808">Transferase</keyword>
<reference key="1">
    <citation type="journal article" date="1996" name="Gene">
        <title>A cDNA encoding canine muscle-type phosphofructokinase.</title>
        <authorList>
            <person name="Smith B.F."/>
            <person name="Henthorn P.S."/>
            <person name="Rajpurohit Y."/>
            <person name="Stedman H."/>
            <person name="Wolfe J.H."/>
            <person name="Patterson D.F."/>
            <person name="Giger U."/>
        </authorList>
    </citation>
    <scope>NUCLEOTIDE SEQUENCE [MRNA]</scope>
    <source>
        <tissue>Skeletal muscle</tissue>
    </source>
</reference>
<feature type="initiator methionine" description="Removed" evidence="2">
    <location>
        <position position="1"/>
    </location>
</feature>
<feature type="chain" id="PRO_0000112014" description="ATP-dependent 6-phosphofructokinase, muscle type">
    <location>
        <begin position="2"/>
        <end position="782"/>
    </location>
</feature>
<feature type="region of interest" description="N-terminal catalytic PFK domain 1">
    <location>
        <begin position="2"/>
        <end position="390"/>
    </location>
</feature>
<feature type="region of interest" description="Interdomain linker">
    <location>
        <begin position="391"/>
        <end position="403"/>
    </location>
</feature>
<feature type="region of interest" description="C-terminal regulatory PFK domain 2">
    <location>
        <begin position="404"/>
        <end position="782"/>
    </location>
</feature>
<feature type="active site" description="Proton acceptor" evidence="6">
    <location>
        <position position="166"/>
    </location>
</feature>
<feature type="binding site" evidence="6">
    <location>
        <position position="25"/>
    </location>
    <ligand>
        <name>ATP</name>
        <dbReference type="ChEBI" id="CHEBI:30616"/>
    </ligand>
</feature>
<feature type="binding site" evidence="6">
    <location>
        <begin position="88"/>
        <end position="89"/>
    </location>
    <ligand>
        <name>ATP</name>
        <dbReference type="ChEBI" id="CHEBI:30616"/>
    </ligand>
</feature>
<feature type="binding site" evidence="6">
    <location>
        <begin position="118"/>
        <end position="121"/>
    </location>
    <ligand>
        <name>ATP</name>
        <dbReference type="ChEBI" id="CHEBI:30616"/>
    </ligand>
</feature>
<feature type="binding site" evidence="6">
    <location>
        <position position="119"/>
    </location>
    <ligand>
        <name>Mg(2+)</name>
        <dbReference type="ChEBI" id="CHEBI:18420"/>
        <note>catalytic</note>
    </ligand>
</feature>
<feature type="binding site" description="in other chain" evidence="6">
    <location>
        <begin position="164"/>
        <end position="166"/>
    </location>
    <ligand>
        <name>substrate</name>
        <note>ligand shared between dimeric partners</note>
    </ligand>
</feature>
<feature type="binding site" evidence="6">
    <location>
        <position position="201"/>
    </location>
    <ligand>
        <name>substrate</name>
        <note>ligand shared between dimeric partners</note>
    </ligand>
</feature>
<feature type="binding site" description="in other chain" evidence="6">
    <location>
        <begin position="208"/>
        <end position="210"/>
    </location>
    <ligand>
        <name>substrate</name>
        <note>ligand shared between dimeric partners</note>
    </ligand>
</feature>
<feature type="binding site" description="in other chain" evidence="6">
    <location>
        <position position="264"/>
    </location>
    <ligand>
        <name>substrate</name>
        <note>ligand shared between dimeric partners</note>
    </ligand>
</feature>
<feature type="binding site" evidence="6">
    <location>
        <position position="292"/>
    </location>
    <ligand>
        <name>substrate</name>
        <note>ligand shared between dimeric partners</note>
    </ligand>
</feature>
<feature type="binding site" description="in other chain" evidence="6">
    <location>
        <begin position="298"/>
        <end position="301"/>
    </location>
    <ligand>
        <name>substrate</name>
        <note>ligand shared between dimeric partners</note>
    </ligand>
</feature>
<feature type="binding site" description="in other chain" evidence="6">
    <location>
        <position position="473"/>
    </location>
    <ligand>
        <name>beta-D-fructose 2,6-bisphosphate</name>
        <dbReference type="ChEBI" id="CHEBI:58579"/>
        <note>allosteric activator; ligand shared between dimeric partners</note>
    </ligand>
</feature>
<feature type="binding site" description="in other chain" evidence="6">
    <location>
        <begin position="530"/>
        <end position="534"/>
    </location>
    <ligand>
        <name>beta-D-fructose 2,6-bisphosphate</name>
        <dbReference type="ChEBI" id="CHEBI:58579"/>
        <note>allosteric activator; ligand shared between dimeric partners</note>
    </ligand>
</feature>
<feature type="binding site" evidence="6">
    <location>
        <position position="568"/>
    </location>
    <ligand>
        <name>beta-D-fructose 2,6-bisphosphate</name>
        <dbReference type="ChEBI" id="CHEBI:58579"/>
        <note>allosteric activator; ligand shared between dimeric partners</note>
    </ligand>
</feature>
<feature type="binding site" description="in other chain" evidence="6">
    <location>
        <begin position="575"/>
        <end position="577"/>
    </location>
    <ligand>
        <name>beta-D-fructose 2,6-bisphosphate</name>
        <dbReference type="ChEBI" id="CHEBI:58579"/>
        <note>allosteric activator; ligand shared between dimeric partners</note>
    </ligand>
</feature>
<feature type="binding site" description="in other chain" evidence="6">
    <location>
        <position position="631"/>
    </location>
    <ligand>
        <name>beta-D-fructose 2,6-bisphosphate</name>
        <dbReference type="ChEBI" id="CHEBI:58579"/>
        <note>allosteric activator; ligand shared between dimeric partners</note>
    </ligand>
</feature>
<feature type="binding site" evidence="6">
    <location>
        <position position="657"/>
    </location>
    <ligand>
        <name>beta-D-fructose 2,6-bisphosphate</name>
        <dbReference type="ChEBI" id="CHEBI:58579"/>
        <note>allosteric activator; ligand shared between dimeric partners</note>
    </ligand>
</feature>
<feature type="binding site" description="in other chain" evidence="6">
    <location>
        <begin position="663"/>
        <end position="666"/>
    </location>
    <ligand>
        <name>beta-D-fructose 2,6-bisphosphate</name>
        <dbReference type="ChEBI" id="CHEBI:58579"/>
        <note>allosteric activator; ligand shared between dimeric partners</note>
    </ligand>
</feature>
<feature type="binding site" description="in other chain" evidence="6">
    <location>
        <position position="737"/>
    </location>
    <ligand>
        <name>beta-D-fructose 2,6-bisphosphate</name>
        <dbReference type="ChEBI" id="CHEBI:58579"/>
        <note>allosteric activator; ligand shared between dimeric partners</note>
    </ligand>
</feature>
<feature type="modified residue" description="N-acetylthreonine" evidence="2">
    <location>
        <position position="2"/>
    </location>
</feature>
<feature type="modified residue" description="Phosphoserine" evidence="5">
    <location>
        <position position="133"/>
    </location>
</feature>
<feature type="modified residue" description="Phosphoserine" evidence="4">
    <location>
        <position position="377"/>
    </location>
</feature>
<feature type="modified residue" description="N6-(2-hydroxyisobutyryl)lysine" evidence="3">
    <location>
        <position position="559"/>
    </location>
</feature>
<feature type="modified residue" description="Phosphoserine" evidence="3">
    <location>
        <position position="669"/>
    </location>
</feature>
<feature type="modified residue" description="Phosphoserine" evidence="2">
    <location>
        <position position="777"/>
    </location>
</feature>
<feature type="glycosylation site" description="O-linked (GlcNAc) serine" evidence="1">
    <location>
        <position position="532"/>
    </location>
</feature>
<sequence>MTHEEHHAAKTLGIGKAIAVLTSGGDAQGMNAAVRAVVRVGIFTGARVFFVHEGYQGLVDGGDHIREATWESVSMMLQLGGTVIGSARCKDFREREGRLRAAHNLVKRGITNLCVIGGDGSLTGADTFRSEWSDLLSDLQKAGKITAEEATKSSYLNIVGLVGSIDNDFCGTDMTIGTDSALHRIIEIVDAITTTAQSHQRTFVLEVMGRHCGYLALVTSLSCGADWVFIPECPPDDDWEEHLCRRLSETRTRGSRLNIIIVAEGAIDKNGKPITSEEIKELVVKRLGYDTRVTVLGHVQRGGTPSAFDRILGSRMGVEAVMALLEGTPDTPACVVSLSGNQAVRLPLMECVQVTKDVTKAMNDRKFDEAMKLRGRSFMNNWEVYKLLAHIRPPVSKTSATMHTVAVMNVGAPAAGMNAAVRSTVRIGLIQGNRVLVVHDGFEGLAKGQIEEAGWSYVGGWTGQGGSKLGTKRTLPKKSFEQISANITKFNIQGLIIIGGFEAYTGGLELMEGRKQFDELCIPFVVIPATVSNNVPGSDFSVGADTALNTICTTCDRIKQSAAGTKRRVFIIETMGGYCGYLATMAGLAAGADAAYIFEEPFTIRDLQANVEHLVQKMKTTVKRGLVLRNEKCNENYTTDFIFNLYSEEGKGIFDSRKNVLGHMQQGGSPTPFDRNFATKMGAKAMNWMSGKIKESYRNGRIFANTPDSGCVLGMRKRALVFQPVTELKDQTDFDHRIPKEQWWLKLRPILKILAKYEIDLDTTEHAHLEHISRKRSGETSI</sequence>
<organism>
    <name type="scientific">Canis lupus familiaris</name>
    <name type="common">Dog</name>
    <name type="synonym">Canis familiaris</name>
    <dbReference type="NCBI Taxonomy" id="9615"/>
    <lineage>
        <taxon>Eukaryota</taxon>
        <taxon>Metazoa</taxon>
        <taxon>Chordata</taxon>
        <taxon>Craniata</taxon>
        <taxon>Vertebrata</taxon>
        <taxon>Euteleostomi</taxon>
        <taxon>Mammalia</taxon>
        <taxon>Eutheria</taxon>
        <taxon>Laurasiatheria</taxon>
        <taxon>Carnivora</taxon>
        <taxon>Caniformia</taxon>
        <taxon>Canidae</taxon>
        <taxon>Canis</taxon>
    </lineage>
</organism>
<proteinExistence type="evidence at transcript level"/>
<gene>
    <name type="primary">PFKM</name>
    <name type="synonym">M-PFK</name>
</gene>
<accession>P52784</accession>
<comment type="function">
    <text evidence="6">Catalyzes the phosphorylation of D-fructose 6-phosphate to fructose 1,6-bisphosphate by ATP, the first committing step of glycolysis.</text>
</comment>
<comment type="catalytic activity">
    <reaction evidence="6">
        <text>beta-D-fructose 6-phosphate + ATP = beta-D-fructose 1,6-bisphosphate + ADP + H(+)</text>
        <dbReference type="Rhea" id="RHEA:16109"/>
        <dbReference type="ChEBI" id="CHEBI:15378"/>
        <dbReference type="ChEBI" id="CHEBI:30616"/>
        <dbReference type="ChEBI" id="CHEBI:32966"/>
        <dbReference type="ChEBI" id="CHEBI:57634"/>
        <dbReference type="ChEBI" id="CHEBI:456216"/>
        <dbReference type="EC" id="2.7.1.11"/>
    </reaction>
</comment>
<comment type="cofactor">
    <cofactor>
        <name>Mg(2+)</name>
        <dbReference type="ChEBI" id="CHEBI:18420"/>
    </cofactor>
</comment>
<comment type="activity regulation">
    <text evidence="6">Allosterically activated by ADP, AMP, or fructose 2,6-bisphosphate, and allosterically inhibited by ATP or citrate.</text>
</comment>
<comment type="pathway">
    <text evidence="6">Carbohydrate degradation; glycolysis; D-glyceraldehyde 3-phosphate and glycerone phosphate from D-glucose: step 3/4.</text>
</comment>
<comment type="subunit">
    <text evidence="4 6 7">Homo- and heterotetramers (By similarity). Phosphofructokinase (PFK) enzyme functions as a tetramer composed of different combinations of 3 types of subunits, called PFKM (M), PFKL (L) and PFKP (P). The composition of the PFK tetramer differs according to the tissue type it is present in. The kinetic and regulatory properties of the tetrameric enzyme are dependent on the subunit composition, hence can vary across tissues (Probable). Interacts (via C-terminus) with HK1 (via N-terminal spermatogenic cell-specific region) (By similarity).</text>
</comment>
<comment type="subcellular location">
    <subcellularLocation>
        <location evidence="6">Cytoplasm</location>
    </subcellularLocation>
</comment>
<comment type="PTM">
    <text evidence="1">GlcNAcylation decreases enzyme activity.</text>
</comment>
<comment type="similarity">
    <text evidence="6">Belongs to the phosphofructokinase type A (PFKA) family. ATP-dependent PFK group I subfamily. Eukaryotic two domain clade 'E' sub-subfamily.</text>
</comment>
<name>PFKAM_CANLF</name>
<protein>
    <recommendedName>
        <fullName evidence="6">ATP-dependent 6-phosphofructokinase, muscle type</fullName>
        <shortName evidence="6">ATP-PFK</shortName>
        <shortName>PFK-M</shortName>
        <ecNumber evidence="6">2.7.1.11</ecNumber>
    </recommendedName>
    <alternativeName>
        <fullName>6-phosphofructokinase type A</fullName>
    </alternativeName>
    <alternativeName>
        <fullName>Phosphofructo-1-kinase isozyme A</fullName>
        <shortName>PFK-A</shortName>
    </alternativeName>
    <alternativeName>
        <fullName evidence="6">Phosphohexokinase</fullName>
    </alternativeName>
</protein>
<evidence type="ECO:0000250" key="1"/>
<evidence type="ECO:0000250" key="2">
    <source>
        <dbReference type="UniProtKB" id="P00511"/>
    </source>
</evidence>
<evidence type="ECO:0000250" key="3">
    <source>
        <dbReference type="UniProtKB" id="P08237"/>
    </source>
</evidence>
<evidence type="ECO:0000250" key="4">
    <source>
        <dbReference type="UniProtKB" id="P47857"/>
    </source>
</evidence>
<evidence type="ECO:0000250" key="5">
    <source>
        <dbReference type="UniProtKB" id="P47858"/>
    </source>
</evidence>
<evidence type="ECO:0000255" key="6">
    <source>
        <dbReference type="HAMAP-Rule" id="MF_03184"/>
    </source>
</evidence>
<evidence type="ECO:0000305" key="7"/>